<reference key="1">
    <citation type="submission" date="2007-10" db="EMBL/GenBank/DDBJ databases">
        <title>Complete sequence of Methanococcus maripaludis C6.</title>
        <authorList>
            <consortium name="US DOE Joint Genome Institute"/>
            <person name="Copeland A."/>
            <person name="Lucas S."/>
            <person name="Lapidus A."/>
            <person name="Barry K."/>
            <person name="Glavina del Rio T."/>
            <person name="Dalin E."/>
            <person name="Tice H."/>
            <person name="Pitluck S."/>
            <person name="Clum A."/>
            <person name="Schmutz J."/>
            <person name="Larimer F."/>
            <person name="Land M."/>
            <person name="Hauser L."/>
            <person name="Kyrpides N."/>
            <person name="Mikhailova N."/>
            <person name="Sieprawska-Lupa M."/>
            <person name="Whitman W.B."/>
            <person name="Richardson P."/>
        </authorList>
    </citation>
    <scope>NUCLEOTIDE SEQUENCE [LARGE SCALE GENOMIC DNA]</scope>
    <source>
        <strain>C6 / ATCC BAA-1332</strain>
    </source>
</reference>
<evidence type="ECO:0000255" key="1">
    <source>
        <dbReference type="HAMAP-Rule" id="MF_00511"/>
    </source>
</evidence>
<evidence type="ECO:0000305" key="2"/>
<protein>
    <recommendedName>
        <fullName evidence="1">Small ribosomal subunit protein eS17</fullName>
    </recommendedName>
    <alternativeName>
        <fullName evidence="2">30S ribosomal protein S17e</fullName>
    </alternativeName>
</protein>
<proteinExistence type="inferred from homology"/>
<keyword id="KW-0687">Ribonucleoprotein</keyword>
<keyword id="KW-0689">Ribosomal protein</keyword>
<sequence length="63" mass="7269">MGRIRQTFIKRTGEELIEKFADKFTSDFEENKKAVEEVAMISTKTLRNRIAGYVTAKVKKMNA</sequence>
<dbReference type="EMBL" id="CP000867">
    <property type="protein sequence ID" value="ABX01137.1"/>
    <property type="molecule type" value="Genomic_DNA"/>
</dbReference>
<dbReference type="SMR" id="A9A655"/>
<dbReference type="STRING" id="444158.MmarC6_0316"/>
<dbReference type="KEGG" id="mmx:MmarC6_0316"/>
<dbReference type="eggNOG" id="arCOG01885">
    <property type="taxonomic scope" value="Archaea"/>
</dbReference>
<dbReference type="HOGENOM" id="CLU_176720_0_1_2"/>
<dbReference type="OrthoDB" id="52479at2157"/>
<dbReference type="PhylomeDB" id="A9A655"/>
<dbReference type="GO" id="GO:0005829">
    <property type="term" value="C:cytosol"/>
    <property type="evidence" value="ECO:0007669"/>
    <property type="project" value="UniProtKB-ARBA"/>
</dbReference>
<dbReference type="GO" id="GO:1990904">
    <property type="term" value="C:ribonucleoprotein complex"/>
    <property type="evidence" value="ECO:0007669"/>
    <property type="project" value="UniProtKB-KW"/>
</dbReference>
<dbReference type="GO" id="GO:0005840">
    <property type="term" value="C:ribosome"/>
    <property type="evidence" value="ECO:0007669"/>
    <property type="project" value="UniProtKB-KW"/>
</dbReference>
<dbReference type="GO" id="GO:0003735">
    <property type="term" value="F:structural constituent of ribosome"/>
    <property type="evidence" value="ECO:0007669"/>
    <property type="project" value="InterPro"/>
</dbReference>
<dbReference type="GO" id="GO:0006412">
    <property type="term" value="P:translation"/>
    <property type="evidence" value="ECO:0007669"/>
    <property type="project" value="UniProtKB-UniRule"/>
</dbReference>
<dbReference type="Gene3D" id="1.10.60.20">
    <property type="entry name" value="Ribosomal protein S17e-like"/>
    <property type="match status" value="1"/>
</dbReference>
<dbReference type="HAMAP" id="MF_00511">
    <property type="entry name" value="Ribosomal_eS17"/>
    <property type="match status" value="1"/>
</dbReference>
<dbReference type="InterPro" id="IPR001210">
    <property type="entry name" value="Ribosomal_eS17"/>
</dbReference>
<dbReference type="InterPro" id="IPR018273">
    <property type="entry name" value="Ribosomal_eS17_CS"/>
</dbReference>
<dbReference type="InterPro" id="IPR036401">
    <property type="entry name" value="Ribosomal_eS17_sf"/>
</dbReference>
<dbReference type="NCBIfam" id="NF002242">
    <property type="entry name" value="PRK01151.1"/>
    <property type="match status" value="1"/>
</dbReference>
<dbReference type="PANTHER" id="PTHR10732">
    <property type="entry name" value="40S RIBOSOMAL PROTEIN S17"/>
    <property type="match status" value="1"/>
</dbReference>
<dbReference type="PANTHER" id="PTHR10732:SF0">
    <property type="entry name" value="40S RIBOSOMAL PROTEIN S17"/>
    <property type="match status" value="1"/>
</dbReference>
<dbReference type="Pfam" id="PF00833">
    <property type="entry name" value="Ribosomal_S17e"/>
    <property type="match status" value="1"/>
</dbReference>
<dbReference type="SUPFAM" id="SSF116820">
    <property type="entry name" value="Rps17e-like"/>
    <property type="match status" value="1"/>
</dbReference>
<dbReference type="PROSITE" id="PS00712">
    <property type="entry name" value="RIBOSOMAL_S17E"/>
    <property type="match status" value="1"/>
</dbReference>
<feature type="chain" id="PRO_1000127258" description="Small ribosomal subunit protein eS17">
    <location>
        <begin position="1"/>
        <end position="63"/>
    </location>
</feature>
<gene>
    <name evidence="1" type="primary">rps17e</name>
    <name type="ordered locus">MmarC6_0316</name>
</gene>
<comment type="similarity">
    <text evidence="1">Belongs to the eukaryotic ribosomal protein eS17 family.</text>
</comment>
<name>RS17E_METM6</name>
<accession>A9A655</accession>
<organism>
    <name type="scientific">Methanococcus maripaludis (strain C6 / ATCC BAA-1332)</name>
    <dbReference type="NCBI Taxonomy" id="444158"/>
    <lineage>
        <taxon>Archaea</taxon>
        <taxon>Methanobacteriati</taxon>
        <taxon>Methanobacteriota</taxon>
        <taxon>Methanomada group</taxon>
        <taxon>Methanococci</taxon>
        <taxon>Methanococcales</taxon>
        <taxon>Methanococcaceae</taxon>
        <taxon>Methanococcus</taxon>
    </lineage>
</organism>